<proteinExistence type="predicted"/>
<evidence type="ECO:0000305" key="1"/>
<feature type="chain" id="PRO_0000196851" description="Uncharacterized mitochondrial protein ymf23">
    <location>
        <begin position="1"/>
        <end position="99"/>
    </location>
</feature>
<keyword id="KW-0496">Mitochondrion</keyword>
<name>YMF23_MARPO</name>
<reference key="1">
    <citation type="journal article" date="1992" name="J. Mol. Biol.">
        <title>Gene organization deduced from the complete sequence of liverwort Marchantia polymorpha mitochondrial DNA. A primitive form of plant mitochondrial genome.</title>
        <authorList>
            <person name="Oda K."/>
            <person name="Yamato K."/>
            <person name="Ohta E."/>
            <person name="Nakamura Y."/>
            <person name="Takemura M."/>
            <person name="Nozato N."/>
            <person name="Akashi K."/>
            <person name="Kanegae T."/>
            <person name="Ogura Y."/>
            <person name="Kohchi T."/>
            <person name="Ohyama K."/>
        </authorList>
    </citation>
    <scope>NUCLEOTIDE SEQUENCE [GENOMIC DNA]</scope>
</reference>
<sequence>MQAQVMKTKCNVFYGIIKNRTPRVVIPISKINYRQIPGIFSKYSSRGFAIGVTSDISPVLLGKATDFSLFLSFGNTETVFSLRLRSTFSNLPRLPIMTF</sequence>
<comment type="subcellular location">
    <subcellularLocation>
        <location evidence="1">Mitochondrion</location>
    </subcellularLocation>
</comment>
<organism>
    <name type="scientific">Marchantia polymorpha</name>
    <name type="common">Common liverwort</name>
    <name type="synonym">Marchantia aquatica</name>
    <dbReference type="NCBI Taxonomy" id="3197"/>
    <lineage>
        <taxon>Eukaryota</taxon>
        <taxon>Viridiplantae</taxon>
        <taxon>Streptophyta</taxon>
        <taxon>Embryophyta</taxon>
        <taxon>Marchantiophyta</taxon>
        <taxon>Marchantiopsida</taxon>
        <taxon>Marchantiidae</taxon>
        <taxon>Marchantiales</taxon>
        <taxon>Marchantiaceae</taxon>
        <taxon>Marchantia</taxon>
    </lineage>
</organism>
<geneLocation type="mitochondrion"/>
<accession>P38466</accession>
<dbReference type="EMBL" id="M68929">
    <property type="protein sequence ID" value="AAC09410.1"/>
    <property type="molecule type" value="Genomic_DNA"/>
</dbReference>
<dbReference type="PIR" id="S25971">
    <property type="entry name" value="S25971"/>
</dbReference>
<dbReference type="GO" id="GO:0005739">
    <property type="term" value="C:mitochondrion"/>
    <property type="evidence" value="ECO:0007669"/>
    <property type="project" value="UniProtKB-SubCell"/>
</dbReference>
<gene>
    <name type="primary">YMF23</name>
</gene>
<protein>
    <recommendedName>
        <fullName>Uncharacterized mitochondrial protein ymf23</fullName>
    </recommendedName>
    <alternativeName>
        <fullName>ORF99</fullName>
    </alternativeName>
</protein>